<organism>
    <name type="scientific">Corynebacterium urealyticum (strain ATCC 43042 / DSM 7109)</name>
    <dbReference type="NCBI Taxonomy" id="504474"/>
    <lineage>
        <taxon>Bacteria</taxon>
        <taxon>Bacillati</taxon>
        <taxon>Actinomycetota</taxon>
        <taxon>Actinomycetes</taxon>
        <taxon>Mycobacteriales</taxon>
        <taxon>Corynebacteriaceae</taxon>
        <taxon>Corynebacterium</taxon>
    </lineage>
</organism>
<evidence type="ECO:0000255" key="1">
    <source>
        <dbReference type="HAMAP-Rule" id="MF_01697"/>
    </source>
</evidence>
<proteinExistence type="inferred from homology"/>
<sequence length="404" mass="44141">MHAWPDPSVPAVAGTPVPLKLFDTADQRVKEVDTTPDANGEVGMYVCGITPYDSTHLGHAATYLTFDLAQRQLLANGHKVHYVQNITDVDDPLFERAERDGVDWRELGTSQINLFRSDMEILSVIPPRDYIGAMESVDEVIAMVQQLLDAGAAYELDQGDIYASIDATEQFGYESNLDRATMEEYFAERGGDPDREGKRDPLDALVWRGHREGEPAWDSPFGPGRPGWHVECSAIATNRLGSHFAIQGGGSDLAFPHHEFSAAHAEAALKVERMAGHYVHAGMIALDGVKMSKSLGNLVFVHKLSEAGHDPSAIRLAVFAGHYREDRDFSDAILAEAEERLTRWREQLAGEVSEAEATEVVDKLRAILADDLNTPEALSLLDGAAGDCNQIIATALDGLLGVRI</sequence>
<protein>
    <recommendedName>
        <fullName evidence="1">L-cysteine:1D-myo-inositol 2-amino-2-deoxy-alpha-D-glucopyranoside ligase 1</fullName>
        <shortName evidence="1">L-Cys:GlcN-Ins ligase 1</shortName>
        <ecNumber evidence="1">6.3.1.13</ecNumber>
    </recommendedName>
    <alternativeName>
        <fullName evidence="1">Mycothiol ligase 1</fullName>
        <shortName evidence="1">MSH ligase 1</shortName>
    </alternativeName>
</protein>
<dbReference type="EC" id="6.3.1.13" evidence="1"/>
<dbReference type="EMBL" id="AM942444">
    <property type="protein sequence ID" value="CAQ04241.1"/>
    <property type="molecule type" value="Genomic_DNA"/>
</dbReference>
<dbReference type="RefSeq" id="WP_012359542.1">
    <property type="nucleotide sequence ID" value="NC_010545.1"/>
</dbReference>
<dbReference type="SMR" id="B1VEQ2"/>
<dbReference type="STRING" id="504474.cu0281"/>
<dbReference type="GeneID" id="60605086"/>
<dbReference type="KEGG" id="cur:cu0281"/>
<dbReference type="eggNOG" id="COG0215">
    <property type="taxonomic scope" value="Bacteria"/>
</dbReference>
<dbReference type="HOGENOM" id="CLU_013528_0_0_11"/>
<dbReference type="Proteomes" id="UP000001727">
    <property type="component" value="Chromosome"/>
</dbReference>
<dbReference type="GO" id="GO:0005829">
    <property type="term" value="C:cytosol"/>
    <property type="evidence" value="ECO:0007669"/>
    <property type="project" value="TreeGrafter"/>
</dbReference>
<dbReference type="GO" id="GO:0005524">
    <property type="term" value="F:ATP binding"/>
    <property type="evidence" value="ECO:0007669"/>
    <property type="project" value="UniProtKB-KW"/>
</dbReference>
<dbReference type="GO" id="GO:0035446">
    <property type="term" value="F:cysteine-glucosaminylinositol ligase activity"/>
    <property type="evidence" value="ECO:0007669"/>
    <property type="project" value="UniProtKB-UniRule"/>
</dbReference>
<dbReference type="GO" id="GO:0004817">
    <property type="term" value="F:cysteine-tRNA ligase activity"/>
    <property type="evidence" value="ECO:0007669"/>
    <property type="project" value="TreeGrafter"/>
</dbReference>
<dbReference type="GO" id="GO:0008270">
    <property type="term" value="F:zinc ion binding"/>
    <property type="evidence" value="ECO:0007669"/>
    <property type="project" value="UniProtKB-UniRule"/>
</dbReference>
<dbReference type="GO" id="GO:0006423">
    <property type="term" value="P:cysteinyl-tRNA aminoacylation"/>
    <property type="evidence" value="ECO:0007669"/>
    <property type="project" value="TreeGrafter"/>
</dbReference>
<dbReference type="GO" id="GO:0010125">
    <property type="term" value="P:mycothiol biosynthetic process"/>
    <property type="evidence" value="ECO:0007669"/>
    <property type="project" value="UniProtKB-UniRule"/>
</dbReference>
<dbReference type="CDD" id="cd00672">
    <property type="entry name" value="CysRS_core"/>
    <property type="match status" value="1"/>
</dbReference>
<dbReference type="Gene3D" id="1.20.120.640">
    <property type="entry name" value="Anticodon-binding domain of a subclass of class I aminoacyl-tRNA synthetases"/>
    <property type="match status" value="1"/>
</dbReference>
<dbReference type="Gene3D" id="3.40.50.620">
    <property type="entry name" value="HUPs"/>
    <property type="match status" value="1"/>
</dbReference>
<dbReference type="HAMAP" id="MF_01697">
    <property type="entry name" value="MshC"/>
    <property type="match status" value="1"/>
</dbReference>
<dbReference type="InterPro" id="IPR024909">
    <property type="entry name" value="Cys-tRNA/MSH_ligase"/>
</dbReference>
<dbReference type="InterPro" id="IPR017812">
    <property type="entry name" value="Mycothiol_ligase_MshC"/>
</dbReference>
<dbReference type="InterPro" id="IPR014729">
    <property type="entry name" value="Rossmann-like_a/b/a_fold"/>
</dbReference>
<dbReference type="InterPro" id="IPR032678">
    <property type="entry name" value="tRNA-synt_1_cat_dom"/>
</dbReference>
<dbReference type="InterPro" id="IPR009080">
    <property type="entry name" value="tRNAsynth_Ia_anticodon-bd"/>
</dbReference>
<dbReference type="NCBIfam" id="TIGR03447">
    <property type="entry name" value="mycothiol_MshC"/>
    <property type="match status" value="1"/>
</dbReference>
<dbReference type="PANTHER" id="PTHR10890:SF3">
    <property type="entry name" value="CYSTEINE--TRNA LIGASE, CYTOPLASMIC"/>
    <property type="match status" value="1"/>
</dbReference>
<dbReference type="PANTHER" id="PTHR10890">
    <property type="entry name" value="CYSTEINYL-TRNA SYNTHETASE"/>
    <property type="match status" value="1"/>
</dbReference>
<dbReference type="Pfam" id="PF01406">
    <property type="entry name" value="tRNA-synt_1e"/>
    <property type="match status" value="1"/>
</dbReference>
<dbReference type="PRINTS" id="PR00983">
    <property type="entry name" value="TRNASYNTHCYS"/>
</dbReference>
<dbReference type="SUPFAM" id="SSF47323">
    <property type="entry name" value="Anticodon-binding domain of a subclass of class I aminoacyl-tRNA synthetases"/>
    <property type="match status" value="1"/>
</dbReference>
<dbReference type="SUPFAM" id="SSF52374">
    <property type="entry name" value="Nucleotidylyl transferase"/>
    <property type="match status" value="1"/>
</dbReference>
<name>MSHC1_CORU7</name>
<keyword id="KW-0067">ATP-binding</keyword>
<keyword id="KW-0436">Ligase</keyword>
<keyword id="KW-0479">Metal-binding</keyword>
<keyword id="KW-0547">Nucleotide-binding</keyword>
<keyword id="KW-1185">Reference proteome</keyword>
<keyword id="KW-0862">Zinc</keyword>
<gene>
    <name evidence="1" type="primary">mshC1</name>
    <name type="ordered locus">cu0281</name>
</gene>
<feature type="chain" id="PRO_0000400443" description="L-cysteine:1D-myo-inositol 2-amino-2-deoxy-alpha-D-glucopyranoside ligase 1">
    <location>
        <begin position="1"/>
        <end position="404"/>
    </location>
</feature>
<feature type="short sequence motif" description="'HIGH' region" evidence="1">
    <location>
        <begin position="49"/>
        <end position="59"/>
    </location>
</feature>
<feature type="short sequence motif" description="'ERGGDP' region" evidence="1">
    <location>
        <begin position="188"/>
        <end position="193"/>
    </location>
</feature>
<feature type="short sequence motif" description="'KMSKS' region" evidence="1">
    <location>
        <begin position="290"/>
        <end position="294"/>
    </location>
</feature>
<feature type="binding site" evidence="1">
    <location>
        <begin position="47"/>
        <end position="50"/>
    </location>
    <ligand>
        <name>L-cysteinyl-5'-AMP</name>
        <dbReference type="ChEBI" id="CHEBI:144924"/>
    </ligand>
</feature>
<feature type="binding site" evidence="1">
    <location>
        <position position="47"/>
    </location>
    <ligand>
        <name>Zn(2+)</name>
        <dbReference type="ChEBI" id="CHEBI:29105"/>
    </ligand>
</feature>
<feature type="binding site" evidence="1">
    <location>
        <position position="62"/>
    </location>
    <ligand>
        <name>L-cysteinyl-5'-AMP</name>
        <dbReference type="ChEBI" id="CHEBI:144924"/>
    </ligand>
</feature>
<feature type="binding site" evidence="1">
    <location>
        <begin position="85"/>
        <end position="87"/>
    </location>
    <ligand>
        <name>L-cysteinyl-5'-AMP</name>
        <dbReference type="ChEBI" id="CHEBI:144924"/>
    </ligand>
</feature>
<feature type="binding site" evidence="1">
    <location>
        <position position="228"/>
    </location>
    <ligand>
        <name>L-cysteinyl-5'-AMP</name>
        <dbReference type="ChEBI" id="CHEBI:144924"/>
    </ligand>
</feature>
<feature type="binding site" evidence="1">
    <location>
        <position position="232"/>
    </location>
    <ligand>
        <name>Zn(2+)</name>
        <dbReference type="ChEBI" id="CHEBI:29105"/>
    </ligand>
</feature>
<feature type="binding site" evidence="1">
    <location>
        <begin position="250"/>
        <end position="252"/>
    </location>
    <ligand>
        <name>L-cysteinyl-5'-AMP</name>
        <dbReference type="ChEBI" id="CHEBI:144924"/>
    </ligand>
</feature>
<feature type="binding site" evidence="1">
    <location>
        <position position="257"/>
    </location>
    <ligand>
        <name>Zn(2+)</name>
        <dbReference type="ChEBI" id="CHEBI:29105"/>
    </ligand>
</feature>
<feature type="binding site" evidence="1">
    <location>
        <position position="284"/>
    </location>
    <ligand>
        <name>L-cysteinyl-5'-AMP</name>
        <dbReference type="ChEBI" id="CHEBI:144924"/>
    </ligand>
</feature>
<reference key="1">
    <citation type="journal article" date="2008" name="J. Biotechnol.">
        <title>The lifestyle of Corynebacterium urealyticum derived from its complete genome sequence established by pyrosequencing.</title>
        <authorList>
            <person name="Tauch A."/>
            <person name="Trost E."/>
            <person name="Tilker A."/>
            <person name="Ludewig U."/>
            <person name="Schneiker S."/>
            <person name="Goesmann A."/>
            <person name="Arnold W."/>
            <person name="Bekel T."/>
            <person name="Brinkrolf K."/>
            <person name="Brune I."/>
            <person name="Goetker S."/>
            <person name="Kalinowski J."/>
            <person name="Kamp P.-B."/>
            <person name="Lobo F.P."/>
            <person name="Viehoever P."/>
            <person name="Weisshaar B."/>
            <person name="Soriano F."/>
            <person name="Droege M."/>
            <person name="Puehler A."/>
        </authorList>
    </citation>
    <scope>NUCLEOTIDE SEQUENCE [LARGE SCALE GENOMIC DNA]</scope>
    <source>
        <strain>ATCC 43042 / DSM 7109</strain>
    </source>
</reference>
<accession>B1VEQ2</accession>
<comment type="function">
    <text evidence="1">Catalyzes the ATP-dependent condensation of GlcN-Ins and L-cysteine to form L-Cys-GlcN-Ins.</text>
</comment>
<comment type="catalytic activity">
    <reaction evidence="1">
        <text>1D-myo-inositol 2-amino-2-deoxy-alpha-D-glucopyranoside + L-cysteine + ATP = 1D-myo-inositol 2-(L-cysteinylamino)-2-deoxy-alpha-D-glucopyranoside + AMP + diphosphate + H(+)</text>
        <dbReference type="Rhea" id="RHEA:26176"/>
        <dbReference type="ChEBI" id="CHEBI:15378"/>
        <dbReference type="ChEBI" id="CHEBI:30616"/>
        <dbReference type="ChEBI" id="CHEBI:33019"/>
        <dbReference type="ChEBI" id="CHEBI:35235"/>
        <dbReference type="ChEBI" id="CHEBI:58886"/>
        <dbReference type="ChEBI" id="CHEBI:58887"/>
        <dbReference type="ChEBI" id="CHEBI:456215"/>
        <dbReference type="EC" id="6.3.1.13"/>
    </reaction>
</comment>
<comment type="cofactor">
    <cofactor evidence="1">
        <name>Zn(2+)</name>
        <dbReference type="ChEBI" id="CHEBI:29105"/>
    </cofactor>
    <text evidence="1">Binds 1 zinc ion per subunit.</text>
</comment>
<comment type="subunit">
    <text evidence="1">Monomer.</text>
</comment>
<comment type="similarity">
    <text evidence="1">Belongs to the class-I aminoacyl-tRNA synthetase family. MshC subfamily.</text>
</comment>